<keyword id="KW-0106">Calcium</keyword>
<keyword id="KW-0109">Calcium transport</keyword>
<keyword id="KW-1003">Cell membrane</keyword>
<keyword id="KW-0256">Endoplasmic reticulum</keyword>
<keyword id="KW-0406">Ion transport</keyword>
<keyword id="KW-0472">Membrane</keyword>
<keyword id="KW-1185">Reference proteome</keyword>
<keyword id="KW-0712">Selenocysteine</keyword>
<keyword id="KW-0812">Transmembrane</keyword>
<keyword id="KW-1133">Transmembrane helix</keyword>
<keyword id="KW-0813">Transport</keyword>
<keyword id="KW-0832">Ubl conjugation</keyword>
<reference key="1">
    <citation type="submission" date="2003-06" db="EMBL/GenBank/DDBJ databases">
        <title>Rattus norvegicus heat shock protein.</title>
        <authorList>
            <person name="Zhou L."/>
            <person name="Guo J."/>
            <person name="Ma Y."/>
        </authorList>
    </citation>
    <scope>NUCLEOTIDE SEQUENCE [MRNA]</scope>
    <source>
        <strain>Sprague-Dawley</strain>
        <tissue>Brain stem</tissue>
    </source>
</reference>
<reference key="2">
    <citation type="journal article" date="2004" name="Genome Res.">
        <title>The status, quality, and expansion of the NIH full-length cDNA project: the Mammalian Gene Collection (MGC).</title>
        <authorList>
            <consortium name="The MGC Project Team"/>
        </authorList>
    </citation>
    <scope>NUCLEOTIDE SEQUENCE [LARGE SCALE MRNA]</scope>
    <source>
        <tissue>Liver</tissue>
    </source>
</reference>
<organism>
    <name type="scientific">Rattus norvegicus</name>
    <name type="common">Rat</name>
    <dbReference type="NCBI Taxonomy" id="10116"/>
    <lineage>
        <taxon>Eukaryota</taxon>
        <taxon>Metazoa</taxon>
        <taxon>Chordata</taxon>
        <taxon>Craniata</taxon>
        <taxon>Vertebrata</taxon>
        <taxon>Euteleostomi</taxon>
        <taxon>Mammalia</taxon>
        <taxon>Eutheria</taxon>
        <taxon>Euarchontoglires</taxon>
        <taxon>Glires</taxon>
        <taxon>Rodentia</taxon>
        <taxon>Myomorpha</taxon>
        <taxon>Muroidea</taxon>
        <taxon>Muridae</taxon>
        <taxon>Murinae</taxon>
        <taxon>Rattus</taxon>
    </lineage>
</organism>
<comment type="function">
    <text evidence="2 3">Required for Ca(2+) flux in immune cells and plays a role in T-cell proliferation and in T-cell and neutrophil migration (By similarity). Involved in endoplasmic reticulum-associated degradation (ERAD) of soluble glycosylated proteins (By similarity). Required for palmitoylation and cell surface expression of CD36 and involved in macrophage uptake of low-density lipoprotein and in foam cell formation (By similarity). Together with ZDHHC6, required for palmitoylation of ITPR1 in immune cells, leading to regulate ITPR1 stability and function. Plays a role in protection of cells from ER stress-induced apoptosis. Protects cells from oxidative stress when overexpressed in cardiomyocytes (By similarity).</text>
</comment>
<comment type="subunit">
    <text evidence="3">Interacts with DERL1, DERL2, DERL3 and SELENOS. The SELENOK-SELENOS complex interacts with VCP. Interacts with ZDHHC6.</text>
</comment>
<comment type="subcellular location">
    <subcellularLocation>
        <location evidence="3">Endoplasmic reticulum membrane</location>
        <topology evidence="4">Single-pass membrane protein</topology>
    </subcellularLocation>
    <subcellularLocation>
        <location evidence="3">Cell membrane</location>
        <topology evidence="4">Single-pass membrane protein</topology>
    </subcellularLocation>
    <text evidence="3">Probably mainly localized in the ER.</text>
</comment>
<comment type="PTM">
    <text evidence="2">Cleaved by CAPN2/m-calpain in resting macrophages but not in activated macrophages. Macrophage activation up-regulates expression of the calpain inhibitor CAST/calpastatin, resulting in inhibition of CAPN2 activity (By similarity).</text>
</comment>
<comment type="PTM">
    <text evidence="3">Truncated SELENOK proteins produced by failed UGA/Sec decoding are ubiquitinated by the CRL2(KLHDC2) complex, which recognizes the diglycine (Gly-Gly) at the C-terminus of truncated SELENOK proteins.</text>
</comment>
<comment type="similarity">
    <text evidence="6">Belongs to the selenoprotein K family.</text>
</comment>
<comment type="sequence caution" evidence="6">
    <conflict type="erroneous termination">
        <sequence resource="EMBL-CDS" id="AAP73816"/>
    </conflict>
    <text>Truncated C-terminus.</text>
</comment>
<protein>
    <recommendedName>
        <fullName evidence="3">Selenoprotein K</fullName>
        <shortName evidence="3">SelK</shortName>
    </recommendedName>
</protein>
<name>SELK_RAT</name>
<proteinExistence type="inferred from homology"/>
<sequence>MVYISNGQVLDSRNQSPWRLSFITDFFWGIAEFVVFFFKTLLQQDVKKRRGYGGSSDSRYDDGRGPPGNPPRRMGRISHLRGPSPPPMAGGUGR</sequence>
<feature type="chain" id="PRO_0000097671" description="Selenoprotein K">
    <location>
        <begin position="1"/>
        <end position="94"/>
    </location>
</feature>
<feature type="transmembrane region" description="Helical" evidence="4">
    <location>
        <begin position="20"/>
        <end position="42"/>
    </location>
</feature>
<feature type="region of interest" description="Disordered" evidence="5">
    <location>
        <begin position="48"/>
        <end position="94"/>
    </location>
</feature>
<feature type="site" description="Cleavage; by CAPN2" evidence="1">
    <location>
        <begin position="81"/>
        <end position="82"/>
    </location>
</feature>
<feature type="non-standard amino acid" description="Selenocysteine" evidence="1">
    <location>
        <position position="92"/>
    </location>
</feature>
<gene>
    <name evidence="7" type="primary">Selenok</name>
    <name evidence="7" type="synonym">Selk</name>
</gene>
<accession>P59798</accession>
<accession>Q5I0Q3</accession>
<evidence type="ECO:0000250" key="1"/>
<evidence type="ECO:0000250" key="2">
    <source>
        <dbReference type="UniProtKB" id="Q9JLJ1"/>
    </source>
</evidence>
<evidence type="ECO:0000250" key="3">
    <source>
        <dbReference type="UniProtKB" id="Q9Y6D0"/>
    </source>
</evidence>
<evidence type="ECO:0000255" key="4"/>
<evidence type="ECO:0000256" key="5">
    <source>
        <dbReference type="SAM" id="MobiDB-lite"/>
    </source>
</evidence>
<evidence type="ECO:0000305" key="6"/>
<evidence type="ECO:0000312" key="7">
    <source>
        <dbReference type="RGD" id="1303129"/>
    </source>
</evidence>
<dbReference type="EMBL" id="AY319924">
    <property type="protein sequence ID" value="AAP73816.1"/>
    <property type="status" value="ALT_SEQ"/>
    <property type="molecule type" value="mRNA"/>
</dbReference>
<dbReference type="EMBL" id="BC088086">
    <property type="protein sequence ID" value="AAH88086.2"/>
    <property type="molecule type" value="mRNA"/>
</dbReference>
<dbReference type="RefSeq" id="NP_997472.2">
    <property type="nucleotide sequence ID" value="NM_207589.6"/>
</dbReference>
<dbReference type="FunCoup" id="P59798">
    <property type="interactions" value="456"/>
</dbReference>
<dbReference type="STRING" id="10116.ENSRNOP00000020284"/>
<dbReference type="PhosphoSitePlus" id="P59798"/>
<dbReference type="jPOST" id="P59798"/>
<dbReference type="PaxDb" id="10116-ENSRNOP00000020284"/>
<dbReference type="Ensembl" id="ENSRNOT00000020284.7">
    <property type="protein sequence ID" value="ENSRNOP00000020284.7"/>
    <property type="gene ID" value="ENSRNOG00000014624.7"/>
</dbReference>
<dbReference type="GeneID" id="290549"/>
<dbReference type="KEGG" id="rno:290549"/>
<dbReference type="UCSC" id="RGD:1303129">
    <property type="organism name" value="rat"/>
</dbReference>
<dbReference type="AGR" id="RGD:1303129"/>
<dbReference type="CTD" id="58515"/>
<dbReference type="RGD" id="1303129">
    <property type="gene designation" value="Selenok"/>
</dbReference>
<dbReference type="eggNOG" id="ENOG502S3PW">
    <property type="taxonomic scope" value="Eukaryota"/>
</dbReference>
<dbReference type="GeneTree" id="ENSGT00390000016119"/>
<dbReference type="InParanoid" id="P59798"/>
<dbReference type="OMA" id="MAGGXGR"/>
<dbReference type="OrthoDB" id="77738at9989"/>
<dbReference type="PhylomeDB" id="P59798"/>
<dbReference type="TreeFam" id="TF328380"/>
<dbReference type="PRO" id="PR:P59798"/>
<dbReference type="Proteomes" id="UP000002494">
    <property type="component" value="Chromosome 16"/>
</dbReference>
<dbReference type="GO" id="GO:0005783">
    <property type="term" value="C:endoplasmic reticulum"/>
    <property type="evidence" value="ECO:0000250"/>
    <property type="project" value="UniProtKB"/>
</dbReference>
<dbReference type="GO" id="GO:0005789">
    <property type="term" value="C:endoplasmic reticulum membrane"/>
    <property type="evidence" value="ECO:0000250"/>
    <property type="project" value="UniProtKB"/>
</dbReference>
<dbReference type="GO" id="GO:0005794">
    <property type="term" value="C:Golgi apparatus"/>
    <property type="evidence" value="ECO:0000318"/>
    <property type="project" value="GO_Central"/>
</dbReference>
<dbReference type="GO" id="GO:0005886">
    <property type="term" value="C:plasma membrane"/>
    <property type="evidence" value="ECO:0007669"/>
    <property type="project" value="UniProtKB-SubCell"/>
</dbReference>
<dbReference type="GO" id="GO:0042802">
    <property type="term" value="F:identical protein binding"/>
    <property type="evidence" value="ECO:0000266"/>
    <property type="project" value="RGD"/>
</dbReference>
<dbReference type="GO" id="GO:0006816">
    <property type="term" value="P:calcium ion transport"/>
    <property type="evidence" value="ECO:0000266"/>
    <property type="project" value="RGD"/>
</dbReference>
<dbReference type="GO" id="GO:0032469">
    <property type="term" value="P:endoplasmic reticulum calcium ion homeostasis"/>
    <property type="evidence" value="ECO:0000318"/>
    <property type="project" value="GO_Central"/>
</dbReference>
<dbReference type="GO" id="GO:0051649">
    <property type="term" value="P:establishment of localization in cell"/>
    <property type="evidence" value="ECO:0000266"/>
    <property type="project" value="RGD"/>
</dbReference>
<dbReference type="GO" id="GO:0070059">
    <property type="term" value="P:intrinsic apoptotic signaling pathway in response to endoplasmic reticulum stress"/>
    <property type="evidence" value="ECO:0000266"/>
    <property type="project" value="RGD"/>
</dbReference>
<dbReference type="GO" id="GO:0010742">
    <property type="term" value="P:macrophage derived foam cell differentiation"/>
    <property type="evidence" value="ECO:0000266"/>
    <property type="project" value="RGD"/>
</dbReference>
<dbReference type="GO" id="GO:1990266">
    <property type="term" value="P:neutrophil migration"/>
    <property type="evidence" value="ECO:0000266"/>
    <property type="project" value="RGD"/>
</dbReference>
<dbReference type="GO" id="GO:0032722">
    <property type="term" value="P:positive regulation of chemokine production"/>
    <property type="evidence" value="ECO:0000266"/>
    <property type="project" value="RGD"/>
</dbReference>
<dbReference type="GO" id="GO:0002230">
    <property type="term" value="P:positive regulation of defense response to virus by host"/>
    <property type="evidence" value="ECO:0000266"/>
    <property type="project" value="RGD"/>
</dbReference>
<dbReference type="GO" id="GO:0032755">
    <property type="term" value="P:positive regulation of interleukin-6 production"/>
    <property type="evidence" value="ECO:0000266"/>
    <property type="project" value="RGD"/>
</dbReference>
<dbReference type="GO" id="GO:0071639">
    <property type="term" value="P:positive regulation of monocyte chemotactic protein-1 production"/>
    <property type="evidence" value="ECO:0000266"/>
    <property type="project" value="RGD"/>
</dbReference>
<dbReference type="GO" id="GO:1902624">
    <property type="term" value="P:positive regulation of neutrophil migration"/>
    <property type="evidence" value="ECO:0000266"/>
    <property type="project" value="RGD"/>
</dbReference>
<dbReference type="GO" id="GO:2000406">
    <property type="term" value="P:positive regulation of T cell migration"/>
    <property type="evidence" value="ECO:0000266"/>
    <property type="project" value="RGD"/>
</dbReference>
<dbReference type="GO" id="GO:0042102">
    <property type="term" value="P:positive regulation of T cell proliferation"/>
    <property type="evidence" value="ECO:0000266"/>
    <property type="project" value="RGD"/>
</dbReference>
<dbReference type="GO" id="GO:0032760">
    <property type="term" value="P:positive regulation of tumor necrosis factor production"/>
    <property type="evidence" value="ECO:0000266"/>
    <property type="project" value="RGD"/>
</dbReference>
<dbReference type="GO" id="GO:0018345">
    <property type="term" value="P:protein palmitoylation"/>
    <property type="evidence" value="ECO:0000250"/>
    <property type="project" value="UniProtKB"/>
</dbReference>
<dbReference type="GO" id="GO:0050848">
    <property type="term" value="P:regulation of calcium-mediated signaling"/>
    <property type="evidence" value="ECO:0000266"/>
    <property type="project" value="RGD"/>
</dbReference>
<dbReference type="GO" id="GO:0051223">
    <property type="term" value="P:regulation of protein transport"/>
    <property type="evidence" value="ECO:0000266"/>
    <property type="project" value="RGD"/>
</dbReference>
<dbReference type="GO" id="GO:0045728">
    <property type="term" value="P:respiratory burst after phagocytosis"/>
    <property type="evidence" value="ECO:0000266"/>
    <property type="project" value="RGD"/>
</dbReference>
<dbReference type="GO" id="GO:0006979">
    <property type="term" value="P:response to oxidative stress"/>
    <property type="evidence" value="ECO:0000266"/>
    <property type="project" value="RGD"/>
</dbReference>
<dbReference type="GO" id="GO:0072678">
    <property type="term" value="P:T cell migration"/>
    <property type="evidence" value="ECO:0000266"/>
    <property type="project" value="RGD"/>
</dbReference>
<dbReference type="GO" id="GO:0042098">
    <property type="term" value="P:T cell proliferation"/>
    <property type="evidence" value="ECO:0000266"/>
    <property type="project" value="RGD"/>
</dbReference>
<dbReference type="InterPro" id="IPR024491">
    <property type="entry name" value="Se_SelK/SelG"/>
</dbReference>
<dbReference type="PANTHER" id="PTHR16875">
    <property type="entry name" value="SELENOPROTEIN K"/>
    <property type="match status" value="1"/>
</dbReference>
<dbReference type="PANTHER" id="PTHR16875:SF0">
    <property type="entry name" value="SELENOPROTEIN K"/>
    <property type="match status" value="1"/>
</dbReference>
<dbReference type="Pfam" id="PF10961">
    <property type="entry name" value="SelK_SelG"/>
    <property type="match status" value="1"/>
</dbReference>